<organismHost>
    <name type="scientific">Acanthamoeba polyphaga</name>
    <name type="common">Amoeba</name>
    <dbReference type="NCBI Taxonomy" id="5757"/>
</organismHost>
<comment type="subcellular location">
    <subcellularLocation>
        <location evidence="3">Secreted</location>
    </subcellularLocation>
</comment>
<keyword id="KW-1015">Disulfide bond</keyword>
<keyword id="KW-0245">EGF-like domain</keyword>
<keyword id="KW-0325">Glycoprotein</keyword>
<keyword id="KW-1185">Reference proteome</keyword>
<keyword id="KW-0964">Secreted</keyword>
<keyword id="KW-0732">Signal</keyword>
<sequence length="525" mass="57973">MGNKWCGIFLTILLLAQMSQTIFGQNPNIPADDHHGAVPPELVMSAVVLKDGRIANYYINATVIETEFNNNPCPCVNQTELKAERLKVLKLWSAYTNYDQQYILDSYEQFATPDTLPDGTVNQFLHQFVVNGYATYSANSVAAEYALQANDANIHLFSELDPVSVEWQADNITVIYKIITNYTLPGLPGAPILDGFVNTHYVKFVPCKAEIWIDIMTQDSLVSTYLAAAQSNHPASDICDKIQQACTGPNQVYDSYESCLNYMSVVVNHTSFCPTGSLIANSSGCHYFHASSALNYPEIHCQHVRPYDSPTCQDFCLTQGCGNCDSNAECVFVSGSNSIVPKYQCKCKSGYVGNGTHCSPVTCSAQWQCPSEYNYGSCQNGLCGCNSGNGFKWVPDQATVNSHQACQCSENETVQWYNGVPECMPIGRCRYVWQCPQAATQYTSITCTKYGQNALVPFNTCLCNYGYDNLGFSYKCQCSVPKREIWSNVRQGTLCLAPNECTDNYHCASNNCQVQPGQWLGTCAA</sequence>
<evidence type="ECO:0000250" key="1"/>
<evidence type="ECO:0000255" key="2"/>
<evidence type="ECO:0000305" key="3"/>
<reference key="1">
    <citation type="journal article" date="2004" name="Science">
        <title>The 1.2-megabase genome sequence of Mimivirus.</title>
        <authorList>
            <person name="Raoult D."/>
            <person name="Audic S."/>
            <person name="Robert C."/>
            <person name="Abergel C."/>
            <person name="Renesto P."/>
            <person name="Ogata H."/>
            <person name="La Scola B."/>
            <person name="Susan M."/>
            <person name="Claverie J.-M."/>
        </authorList>
    </citation>
    <scope>NUCLEOTIDE SEQUENCE [LARGE SCALE GENOMIC DNA]</scope>
    <source>
        <strain>Rowbotham-Bradford</strain>
    </source>
</reference>
<dbReference type="EMBL" id="AY653733">
    <property type="protein sequence ID" value="AAV50920.1"/>
    <property type="molecule type" value="Genomic_DNA"/>
</dbReference>
<dbReference type="SMR" id="Q5UR16"/>
<dbReference type="KEGG" id="vg:9925304"/>
<dbReference type="OrthoDB" id="5122at10239"/>
<dbReference type="Proteomes" id="UP000001134">
    <property type="component" value="Genome"/>
</dbReference>
<dbReference type="GO" id="GO:0005576">
    <property type="term" value="C:extracellular region"/>
    <property type="evidence" value="ECO:0007669"/>
    <property type="project" value="UniProtKB-SubCell"/>
</dbReference>
<dbReference type="Gene3D" id="2.10.25.10">
    <property type="entry name" value="Laminin"/>
    <property type="match status" value="1"/>
</dbReference>
<dbReference type="InterPro" id="IPR000742">
    <property type="entry name" value="EGF-like_dom"/>
</dbReference>
<dbReference type="PROSITE" id="PS01186">
    <property type="entry name" value="EGF_2"/>
    <property type="match status" value="2"/>
</dbReference>
<accession>Q5UR16</accession>
<feature type="signal peptide" evidence="2">
    <location>
        <begin position="1"/>
        <end position="24"/>
    </location>
</feature>
<feature type="chain" id="PRO_0000247410" description="Putative EGF-like domain-containing protein R659">
    <location>
        <begin position="25"/>
        <end position="525"/>
    </location>
</feature>
<feature type="domain" description="EGF-like">
    <location>
        <begin position="317"/>
        <end position="359"/>
    </location>
</feature>
<feature type="glycosylation site" description="N-linked (GlcNAc...) asparagine; by host" evidence="2">
    <location>
        <position position="60"/>
    </location>
</feature>
<feature type="glycosylation site" description="N-linked (GlcNAc...) asparagine; by host" evidence="2">
    <location>
        <position position="77"/>
    </location>
</feature>
<feature type="glycosylation site" description="N-linked (GlcNAc...) asparagine; by host" evidence="2">
    <location>
        <position position="171"/>
    </location>
</feature>
<feature type="glycosylation site" description="N-linked (GlcNAc...) asparagine; by host" evidence="2">
    <location>
        <position position="181"/>
    </location>
</feature>
<feature type="glycosylation site" description="N-linked (GlcNAc...) asparagine; by host" evidence="2">
    <location>
        <position position="268"/>
    </location>
</feature>
<feature type="glycosylation site" description="N-linked (GlcNAc...) asparagine; by host" evidence="2">
    <location>
        <position position="281"/>
    </location>
</feature>
<feature type="glycosylation site" description="N-linked (GlcNAc...) asparagine; by host" evidence="2">
    <location>
        <position position="354"/>
    </location>
</feature>
<feature type="glycosylation site" description="N-linked (GlcNAc...) asparagine; by host" evidence="2">
    <location>
        <position position="411"/>
    </location>
</feature>
<feature type="disulfide bond" evidence="1">
    <location>
        <begin position="321"/>
        <end position="330"/>
    </location>
</feature>
<feature type="disulfide bond" evidence="1">
    <location>
        <begin position="324"/>
        <end position="345"/>
    </location>
</feature>
<feature type="disulfide bond" evidence="1">
    <location>
        <begin position="347"/>
        <end position="358"/>
    </location>
</feature>
<protein>
    <recommendedName>
        <fullName>Putative EGF-like domain-containing protein R659</fullName>
    </recommendedName>
</protein>
<gene>
    <name type="ordered locus">MIMI_R659</name>
</gene>
<proteinExistence type="inferred from homology"/>
<name>YR659_MIMIV</name>
<organism>
    <name type="scientific">Acanthamoeba polyphaga mimivirus</name>
    <name type="common">APMV</name>
    <dbReference type="NCBI Taxonomy" id="212035"/>
    <lineage>
        <taxon>Viruses</taxon>
        <taxon>Varidnaviria</taxon>
        <taxon>Bamfordvirae</taxon>
        <taxon>Nucleocytoviricota</taxon>
        <taxon>Megaviricetes</taxon>
        <taxon>Imitervirales</taxon>
        <taxon>Mimiviridae</taxon>
        <taxon>Megamimivirinae</taxon>
        <taxon>Mimivirus</taxon>
        <taxon>Mimivirus bradfordmassiliense</taxon>
    </lineage>
</organism>